<proteinExistence type="evidence at protein level"/>
<accession>Q56239</accession>
<accession>Q5SIP5</accession>
<name>MUTS_THET8</name>
<dbReference type="EMBL" id="D63810">
    <property type="protein sequence ID" value="BAA09880.1"/>
    <property type="molecule type" value="Genomic_DNA"/>
</dbReference>
<dbReference type="EMBL" id="AP008226">
    <property type="protein sequence ID" value="BAD71147.1"/>
    <property type="molecule type" value="Genomic_DNA"/>
</dbReference>
<dbReference type="RefSeq" id="YP_144590.1">
    <property type="nucleotide sequence ID" value="NC_006461.1"/>
</dbReference>
<dbReference type="SMR" id="Q56239"/>
<dbReference type="EnsemblBacteria" id="BAD71147">
    <property type="protein sequence ID" value="BAD71147"/>
    <property type="gene ID" value="BAD71147"/>
</dbReference>
<dbReference type="KEGG" id="ttj:TTHA1324"/>
<dbReference type="PATRIC" id="fig|300852.9.peg.1302"/>
<dbReference type="eggNOG" id="COG0249">
    <property type="taxonomic scope" value="Bacteria"/>
</dbReference>
<dbReference type="HOGENOM" id="CLU_002472_4_0_0"/>
<dbReference type="PhylomeDB" id="Q56239"/>
<dbReference type="Proteomes" id="UP000000532">
    <property type="component" value="Chromosome"/>
</dbReference>
<dbReference type="GO" id="GO:0005524">
    <property type="term" value="F:ATP binding"/>
    <property type="evidence" value="ECO:0007669"/>
    <property type="project" value="UniProtKB-UniRule"/>
</dbReference>
<dbReference type="GO" id="GO:0140664">
    <property type="term" value="F:ATP-dependent DNA damage sensor activity"/>
    <property type="evidence" value="ECO:0007669"/>
    <property type="project" value="InterPro"/>
</dbReference>
<dbReference type="GO" id="GO:0003684">
    <property type="term" value="F:damaged DNA binding"/>
    <property type="evidence" value="ECO:0007669"/>
    <property type="project" value="UniProtKB-UniRule"/>
</dbReference>
<dbReference type="GO" id="GO:0030983">
    <property type="term" value="F:mismatched DNA binding"/>
    <property type="evidence" value="ECO:0007669"/>
    <property type="project" value="InterPro"/>
</dbReference>
<dbReference type="GO" id="GO:0006298">
    <property type="term" value="P:mismatch repair"/>
    <property type="evidence" value="ECO:0007669"/>
    <property type="project" value="UniProtKB-UniRule"/>
</dbReference>
<dbReference type="CDD" id="cd03284">
    <property type="entry name" value="ABC_MutS1"/>
    <property type="match status" value="1"/>
</dbReference>
<dbReference type="Gene3D" id="1.10.1420.10">
    <property type="match status" value="2"/>
</dbReference>
<dbReference type="Gene3D" id="6.10.140.430">
    <property type="match status" value="1"/>
</dbReference>
<dbReference type="Gene3D" id="3.40.1170.10">
    <property type="entry name" value="DNA repair protein MutS, domain I"/>
    <property type="match status" value="1"/>
</dbReference>
<dbReference type="Gene3D" id="3.30.420.110">
    <property type="entry name" value="MutS, connector domain"/>
    <property type="match status" value="1"/>
</dbReference>
<dbReference type="Gene3D" id="3.40.50.300">
    <property type="entry name" value="P-loop containing nucleotide triphosphate hydrolases"/>
    <property type="match status" value="1"/>
</dbReference>
<dbReference type="HAMAP" id="MF_00096">
    <property type="entry name" value="MutS"/>
    <property type="match status" value="1"/>
</dbReference>
<dbReference type="InterPro" id="IPR005748">
    <property type="entry name" value="DNA_mismatch_repair_MutS"/>
</dbReference>
<dbReference type="InterPro" id="IPR007695">
    <property type="entry name" value="DNA_mismatch_repair_MutS-lik_N"/>
</dbReference>
<dbReference type="InterPro" id="IPR017261">
    <property type="entry name" value="DNA_mismatch_repair_MutS/MSH"/>
</dbReference>
<dbReference type="InterPro" id="IPR000432">
    <property type="entry name" value="DNA_mismatch_repair_MutS_C"/>
</dbReference>
<dbReference type="InterPro" id="IPR007861">
    <property type="entry name" value="DNA_mismatch_repair_MutS_clamp"/>
</dbReference>
<dbReference type="InterPro" id="IPR007696">
    <property type="entry name" value="DNA_mismatch_repair_MutS_core"/>
</dbReference>
<dbReference type="InterPro" id="IPR016151">
    <property type="entry name" value="DNA_mismatch_repair_MutS_N"/>
</dbReference>
<dbReference type="InterPro" id="IPR036187">
    <property type="entry name" value="DNA_mismatch_repair_MutS_sf"/>
</dbReference>
<dbReference type="InterPro" id="IPR007860">
    <property type="entry name" value="DNA_mmatch_repair_MutS_con_dom"/>
</dbReference>
<dbReference type="InterPro" id="IPR045076">
    <property type="entry name" value="MutS"/>
</dbReference>
<dbReference type="InterPro" id="IPR036678">
    <property type="entry name" value="MutS_con_dom_sf"/>
</dbReference>
<dbReference type="InterPro" id="IPR027417">
    <property type="entry name" value="P-loop_NTPase"/>
</dbReference>
<dbReference type="NCBIfam" id="TIGR01070">
    <property type="entry name" value="mutS1"/>
    <property type="match status" value="1"/>
</dbReference>
<dbReference type="NCBIfam" id="NF003810">
    <property type="entry name" value="PRK05399.1"/>
    <property type="match status" value="1"/>
</dbReference>
<dbReference type="PANTHER" id="PTHR11361:SF34">
    <property type="entry name" value="DNA MISMATCH REPAIR PROTEIN MSH1, MITOCHONDRIAL"/>
    <property type="match status" value="1"/>
</dbReference>
<dbReference type="PANTHER" id="PTHR11361">
    <property type="entry name" value="DNA MISMATCH REPAIR PROTEIN MUTS FAMILY MEMBER"/>
    <property type="match status" value="1"/>
</dbReference>
<dbReference type="Pfam" id="PF01624">
    <property type="entry name" value="MutS_I"/>
    <property type="match status" value="1"/>
</dbReference>
<dbReference type="Pfam" id="PF05188">
    <property type="entry name" value="MutS_II"/>
    <property type="match status" value="1"/>
</dbReference>
<dbReference type="Pfam" id="PF05192">
    <property type="entry name" value="MutS_III"/>
    <property type="match status" value="1"/>
</dbReference>
<dbReference type="Pfam" id="PF05190">
    <property type="entry name" value="MutS_IV"/>
    <property type="match status" value="1"/>
</dbReference>
<dbReference type="Pfam" id="PF00488">
    <property type="entry name" value="MutS_V"/>
    <property type="match status" value="1"/>
</dbReference>
<dbReference type="PIRSF" id="PIRSF037677">
    <property type="entry name" value="DNA_mis_repair_Msh6"/>
    <property type="match status" value="1"/>
</dbReference>
<dbReference type="SMART" id="SM00534">
    <property type="entry name" value="MUTSac"/>
    <property type="match status" value="1"/>
</dbReference>
<dbReference type="SMART" id="SM00533">
    <property type="entry name" value="MUTSd"/>
    <property type="match status" value="1"/>
</dbReference>
<dbReference type="SUPFAM" id="SSF55271">
    <property type="entry name" value="DNA repair protein MutS, domain I"/>
    <property type="match status" value="1"/>
</dbReference>
<dbReference type="SUPFAM" id="SSF53150">
    <property type="entry name" value="DNA repair protein MutS, domain II"/>
    <property type="match status" value="1"/>
</dbReference>
<dbReference type="SUPFAM" id="SSF48334">
    <property type="entry name" value="DNA repair protein MutS, domain III"/>
    <property type="match status" value="1"/>
</dbReference>
<dbReference type="SUPFAM" id="SSF52540">
    <property type="entry name" value="P-loop containing nucleoside triphosphate hydrolases"/>
    <property type="match status" value="1"/>
</dbReference>
<dbReference type="PROSITE" id="PS00486">
    <property type="entry name" value="DNA_MISMATCH_REPAIR_2"/>
    <property type="match status" value="1"/>
</dbReference>
<comment type="function">
    <text>This protein is involved in the repair of mismatches in DNA. It is possible that it carries out the mismatch recognition step. Binds double-stranded DNA.</text>
</comment>
<comment type="biophysicochemical properties">
    <temperatureDependence>
        <text>Optimum temperature is 80 degrees Celsius for ATPase activity.</text>
    </temperatureDependence>
</comment>
<comment type="subunit">
    <text>Homotetramer.</text>
</comment>
<comment type="similarity">
    <text evidence="3">Belongs to the DNA mismatch repair MutS family.</text>
</comment>
<feature type="initiator methionine" description="Removed" evidence="2">
    <location>
        <position position="1"/>
    </location>
</feature>
<feature type="chain" id="PRO_0000115160" description="DNA mismatch repair protein MutS">
    <location>
        <begin position="2"/>
        <end position="819"/>
    </location>
</feature>
<feature type="region of interest" description="A1">
    <location>
        <begin position="2"/>
        <end position="130"/>
    </location>
</feature>
<feature type="region of interest" description="A2">
    <location>
        <begin position="131"/>
        <end position="274"/>
    </location>
</feature>
<feature type="region of interest" description="B; DNA-binding">
    <location>
        <begin position="275"/>
        <end position="570"/>
    </location>
</feature>
<feature type="region of interest" description="C">
    <location>
        <begin position="571"/>
        <end position="819"/>
    </location>
</feature>
<feature type="binding site" evidence="1">
    <location>
        <begin position="591"/>
        <end position="598"/>
    </location>
    <ligand>
        <name>ATP</name>
        <dbReference type="ChEBI" id="CHEBI:30616"/>
    </ligand>
</feature>
<feature type="sequence conflict" description="In Ref. 1; AA sequence." evidence="3" ref="1">
    <original>D</original>
    <variation>N</variation>
    <location>
        <position position="789"/>
    </location>
</feature>
<gene>
    <name type="primary">mutS</name>
    <name type="ordered locus">TTHA1324</name>
</gene>
<organism>
    <name type="scientific">Thermus thermophilus (strain ATCC 27634 / DSM 579 / HB8)</name>
    <dbReference type="NCBI Taxonomy" id="300852"/>
    <lineage>
        <taxon>Bacteria</taxon>
        <taxon>Thermotogati</taxon>
        <taxon>Deinococcota</taxon>
        <taxon>Deinococci</taxon>
        <taxon>Thermales</taxon>
        <taxon>Thermaceae</taxon>
        <taxon>Thermus</taxon>
    </lineage>
</organism>
<reference key="1">
    <citation type="journal article" date="1996" name="Nucleic Acids Res.">
        <title>Mismatch DNA recognition protein from an extremely thermophilic bacterium, Thermus thermophilus HB8.</title>
        <authorList>
            <person name="Takamatsu S."/>
            <person name="Kato R."/>
            <person name="Kuramitsu S."/>
        </authorList>
    </citation>
    <scope>NUCLEOTIDE SEQUENCE [GENOMIC DNA]</scope>
    <scope>PROTEIN SEQUENCE OF 2-21</scope>
    <scope>CHARACTERIZATION</scope>
</reference>
<reference key="2">
    <citation type="submission" date="2004-11" db="EMBL/GenBank/DDBJ databases">
        <title>Complete genome sequence of Thermus thermophilus HB8.</title>
        <authorList>
            <person name="Masui R."/>
            <person name="Kurokawa K."/>
            <person name="Nakagawa N."/>
            <person name="Tokunaga F."/>
            <person name="Koyama Y."/>
            <person name="Shibata T."/>
            <person name="Oshima T."/>
            <person name="Yokoyama S."/>
            <person name="Yasunaga T."/>
            <person name="Kuramitsu S."/>
        </authorList>
    </citation>
    <scope>NUCLEOTIDE SEQUENCE [LARGE SCALE GENOMIC DNA]</scope>
    <source>
        <strain>ATCC 27634 / DSM 579 / HB8</strain>
    </source>
</reference>
<reference key="3">
    <citation type="journal article" date="1998" name="Nucleic Acids Res.">
        <title>Domain organization and functional analysis of Thermus thermophilus MutS protein.</title>
        <authorList>
            <person name="Tachiki H."/>
            <person name="Kato R."/>
            <person name="Masui R."/>
            <person name="Hasegawa K."/>
            <person name="Itakura H."/>
            <person name="Fukuyama K."/>
            <person name="Kuramitsu S."/>
        </authorList>
    </citation>
    <scope>DOMAIN STRUCTURE</scope>
</reference>
<evidence type="ECO:0000255" key="1"/>
<evidence type="ECO:0000269" key="2">
    <source>
    </source>
</evidence>
<evidence type="ECO:0000305" key="3"/>
<protein>
    <recommendedName>
        <fullName>DNA mismatch repair protein MutS</fullName>
    </recommendedName>
</protein>
<sequence>MGGYGGVKMEGMLKGEGPGPLPPLLQQYVELRDRYPDYLLLFQVGDFYECFGEDAERLARALGLVLTHKTSKDFTTPMAGIPIRAFDAYAERLLKMGFRLAVADQVEPAEEAEGLVRREVTQLLTPGTLTQEALLPREANYLAAIATGDGWGLAFLDVSTGEFKGTLLKSKSALYDELFRHRPAEVLLAPELRENEAFVAEFRKRFPVMLSEAPFEPQGEGPLALRRAQGALLAYARATQGGALSVRPFRLYDPGAFVRLPEASLKALEVFEPLRGQDTLFGVLDETRTAPGRRLLQAWLRHPLLERGPLEARLDRVERFVREGALREGVRRLLFRLADLERLATRLELSRASPRDLAALRRSLEILPELKGLLGEEVGLPDLSGLLEELRAALVEDPPLKVSEGGLIREGYDPDLDALRRAHAEGVAYFLDLEAREKERTGIPTLKVGYNAVFGYYLEVTRPYYEKVPQEYRPVQTLKDRQRYTLPEMKERERELYRLEALIKRREEEVFLALRERARKEAEALREAARILAELDVYAALAEVAVRHGYTRPRFGERLRIRAGRHPVVERRTAFVPNDLEMAHELVLVTGPNMAGKSTFLRQTALIALLAQIGSFVPAEEAELPLFDGIYTRIGASDDLAGGKSTFMVEMEEVALVLKEATERSLVLLDEVGRGTSSLDGVAIATALAEALHERRCYTLFATHYFELTALALPRLKNLHVAAKEEEGGLVFYHQVLPGPASKSYGVEVAEMAGLPKEVVERARALLSAMAARREGALEEVLERLLALDPDRLTPLEALRFLHELKALALGLPLGSMKG</sequence>
<keyword id="KW-0067">ATP-binding</keyword>
<keyword id="KW-0903">Direct protein sequencing</keyword>
<keyword id="KW-0227">DNA damage</keyword>
<keyword id="KW-0234">DNA repair</keyword>
<keyword id="KW-0238">DNA-binding</keyword>
<keyword id="KW-0547">Nucleotide-binding</keyword>
<keyword id="KW-1185">Reference proteome</keyword>